<dbReference type="EC" id="5.2.1.8" evidence="1"/>
<dbReference type="EMBL" id="CP000238">
    <property type="protein sequence ID" value="ABF14359.1"/>
    <property type="molecule type" value="Genomic_DNA"/>
</dbReference>
<dbReference type="SMR" id="Q1LSS0"/>
<dbReference type="STRING" id="374463.BCI_0565"/>
<dbReference type="KEGG" id="bci:BCI_0565"/>
<dbReference type="HOGENOM" id="CLU_034646_11_0_6"/>
<dbReference type="Proteomes" id="UP000002427">
    <property type="component" value="Chromosome"/>
</dbReference>
<dbReference type="GO" id="GO:0030288">
    <property type="term" value="C:outer membrane-bounded periplasmic space"/>
    <property type="evidence" value="ECO:0007669"/>
    <property type="project" value="InterPro"/>
</dbReference>
<dbReference type="GO" id="GO:0042277">
    <property type="term" value="F:peptide binding"/>
    <property type="evidence" value="ECO:0007669"/>
    <property type="project" value="InterPro"/>
</dbReference>
<dbReference type="GO" id="GO:0003755">
    <property type="term" value="F:peptidyl-prolyl cis-trans isomerase activity"/>
    <property type="evidence" value="ECO:0007669"/>
    <property type="project" value="UniProtKB-UniRule"/>
</dbReference>
<dbReference type="GO" id="GO:0051082">
    <property type="term" value="F:unfolded protein binding"/>
    <property type="evidence" value="ECO:0007669"/>
    <property type="project" value="UniProtKB-UniRule"/>
</dbReference>
<dbReference type="GO" id="GO:0043165">
    <property type="term" value="P:Gram-negative-bacterium-type cell outer membrane assembly"/>
    <property type="evidence" value="ECO:0007669"/>
    <property type="project" value="InterPro"/>
</dbReference>
<dbReference type="GO" id="GO:0006457">
    <property type="term" value="P:protein folding"/>
    <property type="evidence" value="ECO:0007669"/>
    <property type="project" value="UniProtKB-UniRule"/>
</dbReference>
<dbReference type="GO" id="GO:0050821">
    <property type="term" value="P:protein stabilization"/>
    <property type="evidence" value="ECO:0007669"/>
    <property type="project" value="InterPro"/>
</dbReference>
<dbReference type="Gene3D" id="3.10.50.40">
    <property type="match status" value="2"/>
</dbReference>
<dbReference type="Gene3D" id="1.10.4030.10">
    <property type="entry name" value="Porin chaperone SurA, peptide-binding domain"/>
    <property type="match status" value="1"/>
</dbReference>
<dbReference type="HAMAP" id="MF_01183">
    <property type="entry name" value="Chaperone_SurA"/>
    <property type="match status" value="1"/>
</dbReference>
<dbReference type="InterPro" id="IPR050280">
    <property type="entry name" value="OMP_Chaperone_SurA"/>
</dbReference>
<dbReference type="InterPro" id="IPR046357">
    <property type="entry name" value="PPIase_dom_sf"/>
</dbReference>
<dbReference type="InterPro" id="IPR000297">
    <property type="entry name" value="PPIase_PpiC"/>
</dbReference>
<dbReference type="InterPro" id="IPR023058">
    <property type="entry name" value="PPIase_PpiC_CS"/>
</dbReference>
<dbReference type="InterPro" id="IPR023034">
    <property type="entry name" value="PPIase_SurA"/>
</dbReference>
<dbReference type="InterPro" id="IPR015391">
    <property type="entry name" value="SurA_N"/>
</dbReference>
<dbReference type="InterPro" id="IPR027304">
    <property type="entry name" value="Trigger_fact/SurA_dom_sf"/>
</dbReference>
<dbReference type="NCBIfam" id="NF008038">
    <property type="entry name" value="PRK10770.1"/>
    <property type="match status" value="1"/>
</dbReference>
<dbReference type="PANTHER" id="PTHR47637">
    <property type="entry name" value="CHAPERONE SURA"/>
    <property type="match status" value="1"/>
</dbReference>
<dbReference type="PANTHER" id="PTHR47637:SF1">
    <property type="entry name" value="CHAPERONE SURA"/>
    <property type="match status" value="1"/>
</dbReference>
<dbReference type="Pfam" id="PF00639">
    <property type="entry name" value="Rotamase"/>
    <property type="match status" value="2"/>
</dbReference>
<dbReference type="Pfam" id="PF09312">
    <property type="entry name" value="SurA_N"/>
    <property type="match status" value="1"/>
</dbReference>
<dbReference type="SUPFAM" id="SSF54534">
    <property type="entry name" value="FKBP-like"/>
    <property type="match status" value="2"/>
</dbReference>
<dbReference type="SUPFAM" id="SSF109998">
    <property type="entry name" value="Triger factor/SurA peptide-binding domain-like"/>
    <property type="match status" value="1"/>
</dbReference>
<dbReference type="PROSITE" id="PS01096">
    <property type="entry name" value="PPIC_PPIASE_1"/>
    <property type="match status" value="1"/>
</dbReference>
<dbReference type="PROSITE" id="PS50198">
    <property type="entry name" value="PPIC_PPIASE_2"/>
    <property type="match status" value="2"/>
</dbReference>
<name>SURA_BAUCH</name>
<feature type="signal peptide" evidence="1">
    <location>
        <begin position="1"/>
        <end position="24"/>
    </location>
</feature>
<feature type="chain" id="PRO_0000270000" description="Chaperone SurA">
    <location>
        <begin position="25"/>
        <end position="433"/>
    </location>
</feature>
<feature type="domain" description="PpiC 1" evidence="1">
    <location>
        <begin position="173"/>
        <end position="274"/>
    </location>
</feature>
<feature type="domain" description="PpiC 2" evidence="1">
    <location>
        <begin position="285"/>
        <end position="385"/>
    </location>
</feature>
<comment type="function">
    <text evidence="1">Chaperone involved in the correct folding and assembly of outer membrane proteins. Recognizes specific patterns of aromatic residues and the orientation of their side chains, which are found more frequently in integral outer membrane proteins. May act in both early periplasmic and late outer membrane-associated steps of protein maturation.</text>
</comment>
<comment type="catalytic activity">
    <reaction evidence="1">
        <text>[protein]-peptidylproline (omega=180) = [protein]-peptidylproline (omega=0)</text>
        <dbReference type="Rhea" id="RHEA:16237"/>
        <dbReference type="Rhea" id="RHEA-COMP:10747"/>
        <dbReference type="Rhea" id="RHEA-COMP:10748"/>
        <dbReference type="ChEBI" id="CHEBI:83833"/>
        <dbReference type="ChEBI" id="CHEBI:83834"/>
        <dbReference type="EC" id="5.2.1.8"/>
    </reaction>
</comment>
<comment type="subcellular location">
    <subcellularLocation>
        <location evidence="1">Periplasm</location>
    </subcellularLocation>
    <text evidence="1">Is capable of associating with the outer membrane.</text>
</comment>
<comment type="domain">
    <text evidence="1">The PPIase activity resides only in the second parvulin domain. The N-terminal region and the C-terminal tail are necessary and sufficient for the chaperone activity of SurA. The PPIase activity is dispensable for SurA to function as a chaperone. The N-terminal region and the C-terminal tail are also required for porin recognition.</text>
</comment>
<proteinExistence type="inferred from homology"/>
<reference key="1">
    <citation type="journal article" date="2006" name="PLoS Biol.">
        <title>Metabolic complementarity and genomics of the dual bacterial symbiosis of sharpshooters.</title>
        <authorList>
            <person name="Wu D."/>
            <person name="Daugherty S.C."/>
            <person name="Van Aken S.E."/>
            <person name="Pai G.H."/>
            <person name="Watkins K.L."/>
            <person name="Khouri H."/>
            <person name="Tallon L.J."/>
            <person name="Zaborsky J.M."/>
            <person name="Dunbar H.E."/>
            <person name="Tran P.L."/>
            <person name="Moran N.A."/>
            <person name="Eisen J.A."/>
        </authorList>
    </citation>
    <scope>NUCLEOTIDE SEQUENCE [LARGE SCALE GENOMIC DNA]</scope>
</reference>
<evidence type="ECO:0000255" key="1">
    <source>
        <dbReference type="HAMAP-Rule" id="MF_01183"/>
    </source>
</evidence>
<gene>
    <name evidence="1" type="primary">surA</name>
    <name type="ordered locus">BCI_0565</name>
</gene>
<protein>
    <recommendedName>
        <fullName evidence="1">Chaperone SurA</fullName>
    </recommendedName>
    <alternativeName>
        <fullName evidence="1">Peptidyl-prolyl cis-trans isomerase SurA</fullName>
        <shortName evidence="1">PPIase SurA</shortName>
        <ecNumber evidence="1">5.2.1.8</ecNumber>
    </alternativeName>
    <alternativeName>
        <fullName evidence="1">Rotamase SurA</fullName>
    </alternativeName>
</protein>
<organism>
    <name type="scientific">Baumannia cicadellinicola subsp. Homalodisca coagulata</name>
    <dbReference type="NCBI Taxonomy" id="374463"/>
    <lineage>
        <taxon>Bacteria</taxon>
        <taxon>Pseudomonadati</taxon>
        <taxon>Pseudomonadota</taxon>
        <taxon>Gammaproteobacteria</taxon>
        <taxon>Candidatus Palibaumannia</taxon>
    </lineage>
</organism>
<accession>Q1LSS0</accession>
<keyword id="KW-0143">Chaperone</keyword>
<keyword id="KW-0413">Isomerase</keyword>
<keyword id="KW-0574">Periplasm</keyword>
<keyword id="KW-1185">Reference proteome</keyword>
<keyword id="KW-0677">Repeat</keyword>
<keyword id="KW-0697">Rotamase</keyword>
<keyword id="KW-0732">Signal</keyword>
<sequence length="433" mass="49960">MDGIKLLLSIIILYFYTYINCAIAEPNLIDQVVAIVNNDIILESELKILRDSIQNYAKLNYQEQLEDNQLNKHIIDRLIIKKIIQQQAKLSHITIAETKLNKIIHDLTSSQNLSIAKLRHLMYSNRNIYDIYRAQLRQDLLIAEVLNSALHRRITILPQEVEFLAKKIAIRKNTTFNLSHMLIPLPEKPSRKQKNEAEALALFLMAQSEKQNDFRELAIKYSTDTQMLNSFSMIGIQHTKLPLILAKHLYGAQKGSVIGPIYSDIGIHILKVHDMIRTHMSNIPITEVYARHILLRTSVKRNDNQARVQLLNIARKINIGDISFSIVAKQISEDIISSQQGGDLGWNALNAFTPTFRKLLLSLNKGQLSIPVRSSQGWHLIQLQNIRQVENTTNKEAAYRILWHRKLAEIAHIWIQEQRDLAYIKIINHHDNR</sequence>